<keyword id="KW-0627">Porphyrin biosynthesis</keyword>
<keyword id="KW-0808">Transferase</keyword>
<name>HEM3_SHEHH</name>
<proteinExistence type="inferred from homology"/>
<organism>
    <name type="scientific">Shewanella halifaxensis (strain HAW-EB4)</name>
    <dbReference type="NCBI Taxonomy" id="458817"/>
    <lineage>
        <taxon>Bacteria</taxon>
        <taxon>Pseudomonadati</taxon>
        <taxon>Pseudomonadota</taxon>
        <taxon>Gammaproteobacteria</taxon>
        <taxon>Alteromonadales</taxon>
        <taxon>Shewanellaceae</taxon>
        <taxon>Shewanella</taxon>
    </lineage>
</organism>
<reference key="1">
    <citation type="submission" date="2008-01" db="EMBL/GenBank/DDBJ databases">
        <title>Complete sequence of Shewanella halifaxensis HAW-EB4.</title>
        <authorList>
            <consortium name="US DOE Joint Genome Institute"/>
            <person name="Copeland A."/>
            <person name="Lucas S."/>
            <person name="Lapidus A."/>
            <person name="Glavina del Rio T."/>
            <person name="Dalin E."/>
            <person name="Tice H."/>
            <person name="Bruce D."/>
            <person name="Goodwin L."/>
            <person name="Pitluck S."/>
            <person name="Sims D."/>
            <person name="Brettin T."/>
            <person name="Detter J.C."/>
            <person name="Han C."/>
            <person name="Kuske C.R."/>
            <person name="Schmutz J."/>
            <person name="Larimer F."/>
            <person name="Land M."/>
            <person name="Hauser L."/>
            <person name="Kyrpides N."/>
            <person name="Kim E."/>
            <person name="Zhao J.-S."/>
            <person name="Richardson P."/>
        </authorList>
    </citation>
    <scope>NUCLEOTIDE SEQUENCE [LARGE SCALE GENOMIC DNA]</scope>
    <source>
        <strain>HAW-EB4</strain>
    </source>
</reference>
<feature type="chain" id="PRO_1000078622" description="Porphobilinogen deaminase">
    <location>
        <begin position="1"/>
        <end position="310"/>
    </location>
</feature>
<feature type="modified residue" description="S-(dipyrrolylmethanemethyl)cysteine" evidence="1">
    <location>
        <position position="242"/>
    </location>
</feature>
<sequence>MSQNLIRIATRKSPLAMWQAEFVKAELEKIHEGLTVELLPMSTKGDIILDTPLAKVGGKGLFVKELEVAMLEGKADIAVHSMKDVPVEFPEGLGLEVICEREDPRDAFVSNTYKTIEDLPQGAVVGTSSLRRQCQIRAARPDLVIKDLRGNVGTRLAKLDAGNYDAIILAAAGLKRLKLEERIASFISAEQSLPANGQGAVGIECRTDDARVKALLAPLEHAETRMRVTAERAMNTRLEGGCQVPIGAYAEIDGDTLSLRGLVGNPDGSQIITAASSGNKADAEKLGVALAEELLAKGAKTILDAVYANA</sequence>
<dbReference type="EC" id="2.5.1.61" evidence="1"/>
<dbReference type="EMBL" id="CP000931">
    <property type="protein sequence ID" value="ABZ78457.1"/>
    <property type="molecule type" value="Genomic_DNA"/>
</dbReference>
<dbReference type="RefSeq" id="WP_012278974.1">
    <property type="nucleotide sequence ID" value="NC_010334.1"/>
</dbReference>
<dbReference type="SMR" id="B0TJ54"/>
<dbReference type="STRING" id="458817.Shal_3917"/>
<dbReference type="KEGG" id="shl:Shal_3917"/>
<dbReference type="eggNOG" id="COG0181">
    <property type="taxonomic scope" value="Bacteria"/>
</dbReference>
<dbReference type="HOGENOM" id="CLU_019704_0_2_6"/>
<dbReference type="OrthoDB" id="9810298at2"/>
<dbReference type="UniPathway" id="UPA00251">
    <property type="reaction ID" value="UER00319"/>
</dbReference>
<dbReference type="Proteomes" id="UP000001317">
    <property type="component" value="Chromosome"/>
</dbReference>
<dbReference type="GO" id="GO:0005737">
    <property type="term" value="C:cytoplasm"/>
    <property type="evidence" value="ECO:0007669"/>
    <property type="project" value="TreeGrafter"/>
</dbReference>
<dbReference type="GO" id="GO:0004418">
    <property type="term" value="F:hydroxymethylbilane synthase activity"/>
    <property type="evidence" value="ECO:0007669"/>
    <property type="project" value="UniProtKB-UniRule"/>
</dbReference>
<dbReference type="GO" id="GO:0006782">
    <property type="term" value="P:protoporphyrinogen IX biosynthetic process"/>
    <property type="evidence" value="ECO:0007669"/>
    <property type="project" value="UniProtKB-UniRule"/>
</dbReference>
<dbReference type="CDD" id="cd13646">
    <property type="entry name" value="PBP2_EcHMBS_like"/>
    <property type="match status" value="1"/>
</dbReference>
<dbReference type="FunFam" id="3.30.160.40:FF:000002">
    <property type="entry name" value="Porphobilinogen deaminase"/>
    <property type="match status" value="1"/>
</dbReference>
<dbReference type="FunFam" id="3.40.190.10:FF:000004">
    <property type="entry name" value="Porphobilinogen deaminase"/>
    <property type="match status" value="1"/>
</dbReference>
<dbReference type="FunFam" id="3.40.190.10:FF:000005">
    <property type="entry name" value="Porphobilinogen deaminase"/>
    <property type="match status" value="1"/>
</dbReference>
<dbReference type="Gene3D" id="3.40.190.10">
    <property type="entry name" value="Periplasmic binding protein-like II"/>
    <property type="match status" value="2"/>
</dbReference>
<dbReference type="Gene3D" id="3.30.160.40">
    <property type="entry name" value="Porphobilinogen deaminase, C-terminal domain"/>
    <property type="match status" value="1"/>
</dbReference>
<dbReference type="HAMAP" id="MF_00260">
    <property type="entry name" value="Porphobil_deam"/>
    <property type="match status" value="1"/>
</dbReference>
<dbReference type="InterPro" id="IPR000860">
    <property type="entry name" value="HemC"/>
</dbReference>
<dbReference type="InterPro" id="IPR022419">
    <property type="entry name" value="Porphobilin_deaminase_cofac_BS"/>
</dbReference>
<dbReference type="InterPro" id="IPR022417">
    <property type="entry name" value="Porphobilin_deaminase_N"/>
</dbReference>
<dbReference type="InterPro" id="IPR022418">
    <property type="entry name" value="Porphobilinogen_deaminase_C"/>
</dbReference>
<dbReference type="InterPro" id="IPR036803">
    <property type="entry name" value="Porphobilinogen_deaminase_C_sf"/>
</dbReference>
<dbReference type="NCBIfam" id="TIGR00212">
    <property type="entry name" value="hemC"/>
    <property type="match status" value="1"/>
</dbReference>
<dbReference type="PANTHER" id="PTHR11557">
    <property type="entry name" value="PORPHOBILINOGEN DEAMINASE"/>
    <property type="match status" value="1"/>
</dbReference>
<dbReference type="PANTHER" id="PTHR11557:SF0">
    <property type="entry name" value="PORPHOBILINOGEN DEAMINASE"/>
    <property type="match status" value="1"/>
</dbReference>
<dbReference type="Pfam" id="PF01379">
    <property type="entry name" value="Porphobil_deam"/>
    <property type="match status" value="1"/>
</dbReference>
<dbReference type="Pfam" id="PF03900">
    <property type="entry name" value="Porphobil_deamC"/>
    <property type="match status" value="1"/>
</dbReference>
<dbReference type="PIRSF" id="PIRSF001438">
    <property type="entry name" value="4pyrrol_synth_OHMeBilane_synth"/>
    <property type="match status" value="1"/>
</dbReference>
<dbReference type="PRINTS" id="PR00151">
    <property type="entry name" value="PORPHBDMNASE"/>
</dbReference>
<dbReference type="SUPFAM" id="SSF53850">
    <property type="entry name" value="Periplasmic binding protein-like II"/>
    <property type="match status" value="1"/>
</dbReference>
<dbReference type="SUPFAM" id="SSF54782">
    <property type="entry name" value="Porphobilinogen deaminase (hydroxymethylbilane synthase), C-terminal domain"/>
    <property type="match status" value="1"/>
</dbReference>
<dbReference type="PROSITE" id="PS00533">
    <property type="entry name" value="PORPHOBILINOGEN_DEAM"/>
    <property type="match status" value="1"/>
</dbReference>
<comment type="function">
    <text evidence="1">Tetrapolymerization of the monopyrrole PBG into the hydroxymethylbilane pre-uroporphyrinogen in several discrete steps.</text>
</comment>
<comment type="catalytic activity">
    <reaction evidence="1">
        <text>4 porphobilinogen + H2O = hydroxymethylbilane + 4 NH4(+)</text>
        <dbReference type="Rhea" id="RHEA:13185"/>
        <dbReference type="ChEBI" id="CHEBI:15377"/>
        <dbReference type="ChEBI" id="CHEBI:28938"/>
        <dbReference type="ChEBI" id="CHEBI:57845"/>
        <dbReference type="ChEBI" id="CHEBI:58126"/>
        <dbReference type="EC" id="2.5.1.61"/>
    </reaction>
</comment>
<comment type="cofactor">
    <cofactor evidence="1">
        <name>dipyrromethane</name>
        <dbReference type="ChEBI" id="CHEBI:60342"/>
    </cofactor>
    <text evidence="1">Binds 1 dipyrromethane group covalently.</text>
</comment>
<comment type="pathway">
    <text evidence="1">Porphyrin-containing compound metabolism; protoporphyrin-IX biosynthesis; coproporphyrinogen-III from 5-aminolevulinate: step 2/4.</text>
</comment>
<comment type="subunit">
    <text evidence="1">Monomer.</text>
</comment>
<comment type="miscellaneous">
    <text evidence="1">The porphobilinogen subunits are added to the dipyrromethane group.</text>
</comment>
<comment type="similarity">
    <text evidence="1">Belongs to the HMBS family.</text>
</comment>
<gene>
    <name evidence="1" type="primary">hemC</name>
    <name type="ordered locus">Shal_3917</name>
</gene>
<accession>B0TJ54</accession>
<evidence type="ECO:0000255" key="1">
    <source>
        <dbReference type="HAMAP-Rule" id="MF_00260"/>
    </source>
</evidence>
<protein>
    <recommendedName>
        <fullName evidence="1">Porphobilinogen deaminase</fullName>
        <shortName evidence="1">PBG</shortName>
        <ecNumber evidence="1">2.5.1.61</ecNumber>
    </recommendedName>
    <alternativeName>
        <fullName evidence="1">Hydroxymethylbilane synthase</fullName>
        <shortName evidence="1">HMBS</shortName>
    </alternativeName>
    <alternativeName>
        <fullName evidence="1">Pre-uroporphyrinogen synthase</fullName>
    </alternativeName>
</protein>